<dbReference type="EMBL" id="CP000323">
    <property type="protein sequence ID" value="ABE75956.1"/>
    <property type="molecule type" value="Genomic_DNA"/>
</dbReference>
<dbReference type="RefSeq" id="WP_011514492.1">
    <property type="nucleotide sequence ID" value="NC_007969.1"/>
</dbReference>
<dbReference type="SMR" id="Q1Q8P7"/>
<dbReference type="STRING" id="335284.Pcryo_2179"/>
<dbReference type="KEGG" id="pcr:Pcryo_2179"/>
<dbReference type="eggNOG" id="COG0244">
    <property type="taxonomic scope" value="Bacteria"/>
</dbReference>
<dbReference type="HOGENOM" id="CLU_092227_0_1_6"/>
<dbReference type="Proteomes" id="UP000002425">
    <property type="component" value="Chromosome"/>
</dbReference>
<dbReference type="GO" id="GO:1990904">
    <property type="term" value="C:ribonucleoprotein complex"/>
    <property type="evidence" value="ECO:0007669"/>
    <property type="project" value="UniProtKB-KW"/>
</dbReference>
<dbReference type="GO" id="GO:0005840">
    <property type="term" value="C:ribosome"/>
    <property type="evidence" value="ECO:0007669"/>
    <property type="project" value="UniProtKB-KW"/>
</dbReference>
<dbReference type="GO" id="GO:0070180">
    <property type="term" value="F:large ribosomal subunit rRNA binding"/>
    <property type="evidence" value="ECO:0007669"/>
    <property type="project" value="UniProtKB-UniRule"/>
</dbReference>
<dbReference type="GO" id="GO:0006412">
    <property type="term" value="P:translation"/>
    <property type="evidence" value="ECO:0007669"/>
    <property type="project" value="UniProtKB-UniRule"/>
</dbReference>
<dbReference type="CDD" id="cd05797">
    <property type="entry name" value="Ribosomal_L10"/>
    <property type="match status" value="1"/>
</dbReference>
<dbReference type="Gene3D" id="3.30.70.1730">
    <property type="match status" value="1"/>
</dbReference>
<dbReference type="Gene3D" id="6.10.250.2350">
    <property type="match status" value="1"/>
</dbReference>
<dbReference type="HAMAP" id="MF_00362">
    <property type="entry name" value="Ribosomal_uL10"/>
    <property type="match status" value="1"/>
</dbReference>
<dbReference type="InterPro" id="IPR001790">
    <property type="entry name" value="Ribosomal_uL10"/>
</dbReference>
<dbReference type="InterPro" id="IPR043141">
    <property type="entry name" value="Ribosomal_uL10-like_sf"/>
</dbReference>
<dbReference type="InterPro" id="IPR022973">
    <property type="entry name" value="Ribosomal_uL10_bac"/>
</dbReference>
<dbReference type="InterPro" id="IPR047865">
    <property type="entry name" value="Ribosomal_uL10_bac_type"/>
</dbReference>
<dbReference type="NCBIfam" id="NF000955">
    <property type="entry name" value="PRK00099.1-1"/>
    <property type="match status" value="1"/>
</dbReference>
<dbReference type="PANTHER" id="PTHR11560">
    <property type="entry name" value="39S RIBOSOMAL PROTEIN L10, MITOCHONDRIAL"/>
    <property type="match status" value="1"/>
</dbReference>
<dbReference type="Pfam" id="PF00466">
    <property type="entry name" value="Ribosomal_L10"/>
    <property type="match status" value="1"/>
</dbReference>
<dbReference type="SUPFAM" id="SSF160369">
    <property type="entry name" value="Ribosomal protein L10-like"/>
    <property type="match status" value="1"/>
</dbReference>
<proteinExistence type="inferred from homology"/>
<organism>
    <name type="scientific">Psychrobacter cryohalolentis (strain ATCC BAA-1226 / DSM 17306 / VKM B-2378 / K5)</name>
    <dbReference type="NCBI Taxonomy" id="335284"/>
    <lineage>
        <taxon>Bacteria</taxon>
        <taxon>Pseudomonadati</taxon>
        <taxon>Pseudomonadota</taxon>
        <taxon>Gammaproteobacteria</taxon>
        <taxon>Moraxellales</taxon>
        <taxon>Moraxellaceae</taxon>
        <taxon>Psychrobacter</taxon>
    </lineage>
</organism>
<comment type="function">
    <text evidence="1">Forms part of the ribosomal stalk, playing a central role in the interaction of the ribosome with GTP-bound translation factors.</text>
</comment>
<comment type="subunit">
    <text evidence="1">Part of the ribosomal stalk of the 50S ribosomal subunit. The N-terminus interacts with L11 and the large rRNA to form the base of the stalk. The C-terminus forms an elongated spine to which L12 dimers bind in a sequential fashion forming a multimeric L10(L12)X complex.</text>
</comment>
<comment type="similarity">
    <text evidence="1">Belongs to the universal ribosomal protein uL10 family.</text>
</comment>
<sequence>MALTLEQKQQVVAEVSEVAANAYSAVAAEYHGIGVAKLTKLREQAREKGVVLKVVKNTLAKRAFEGTKFESMSDRMTGPLLLAFSMEDLGSAARVIFDFSKDHKALETKLVSVGGVVYGPEELERVSKLPTRDEAISILMATMNAPVTKLVQTMNAVPGKFVRTVAAIKDAKEAA</sequence>
<evidence type="ECO:0000255" key="1">
    <source>
        <dbReference type="HAMAP-Rule" id="MF_00362"/>
    </source>
</evidence>
<evidence type="ECO:0000305" key="2"/>
<accession>Q1Q8P7</accession>
<name>RL10_PSYCK</name>
<feature type="chain" id="PRO_1000005566" description="Large ribosomal subunit protein uL10">
    <location>
        <begin position="1"/>
        <end position="175"/>
    </location>
</feature>
<keyword id="KW-0687">Ribonucleoprotein</keyword>
<keyword id="KW-0689">Ribosomal protein</keyword>
<keyword id="KW-0694">RNA-binding</keyword>
<keyword id="KW-0699">rRNA-binding</keyword>
<reference key="1">
    <citation type="submission" date="2006-03" db="EMBL/GenBank/DDBJ databases">
        <title>Complete sequence of chromosome of Psychrobacter cryohalolentis K5.</title>
        <authorList>
            <consortium name="US DOE Joint Genome Institute"/>
            <person name="Copeland A."/>
            <person name="Lucas S."/>
            <person name="Lapidus A."/>
            <person name="Barry K."/>
            <person name="Detter J.C."/>
            <person name="Glavina T."/>
            <person name="Hammon N."/>
            <person name="Israni S."/>
            <person name="Dalin E."/>
            <person name="Tice H."/>
            <person name="Pitluck S."/>
            <person name="Brettin T."/>
            <person name="Bruce D."/>
            <person name="Han C."/>
            <person name="Tapia R."/>
            <person name="Sims D.R."/>
            <person name="Gilna P."/>
            <person name="Schmutz J."/>
            <person name="Larimer F."/>
            <person name="Land M."/>
            <person name="Hauser L."/>
            <person name="Kyrpides N."/>
            <person name="Kim E."/>
            <person name="Richardson P."/>
        </authorList>
    </citation>
    <scope>NUCLEOTIDE SEQUENCE [LARGE SCALE GENOMIC DNA]</scope>
    <source>
        <strain>ATCC BAA-1226 / DSM 17306 / VKM B-2378 / K5</strain>
    </source>
</reference>
<gene>
    <name evidence="1" type="primary">rplJ</name>
    <name type="ordered locus">Pcryo_2179</name>
</gene>
<protein>
    <recommendedName>
        <fullName evidence="1">Large ribosomal subunit protein uL10</fullName>
    </recommendedName>
    <alternativeName>
        <fullName evidence="2">50S ribosomal protein L10</fullName>
    </alternativeName>
</protein>